<gene>
    <name evidence="1" type="primary">hisS</name>
    <name type="ordered locus">SPC_1132</name>
</gene>
<proteinExistence type="inferred from homology"/>
<evidence type="ECO:0000255" key="1">
    <source>
        <dbReference type="HAMAP-Rule" id="MF_00127"/>
    </source>
</evidence>
<keyword id="KW-0030">Aminoacyl-tRNA synthetase</keyword>
<keyword id="KW-0067">ATP-binding</keyword>
<keyword id="KW-0963">Cytoplasm</keyword>
<keyword id="KW-0436">Ligase</keyword>
<keyword id="KW-0547">Nucleotide-binding</keyword>
<keyword id="KW-0648">Protein biosynthesis</keyword>
<comment type="catalytic activity">
    <reaction evidence="1">
        <text>tRNA(His) + L-histidine + ATP = L-histidyl-tRNA(His) + AMP + diphosphate + H(+)</text>
        <dbReference type="Rhea" id="RHEA:17313"/>
        <dbReference type="Rhea" id="RHEA-COMP:9665"/>
        <dbReference type="Rhea" id="RHEA-COMP:9689"/>
        <dbReference type="ChEBI" id="CHEBI:15378"/>
        <dbReference type="ChEBI" id="CHEBI:30616"/>
        <dbReference type="ChEBI" id="CHEBI:33019"/>
        <dbReference type="ChEBI" id="CHEBI:57595"/>
        <dbReference type="ChEBI" id="CHEBI:78442"/>
        <dbReference type="ChEBI" id="CHEBI:78527"/>
        <dbReference type="ChEBI" id="CHEBI:456215"/>
        <dbReference type="EC" id="6.1.1.21"/>
    </reaction>
</comment>
<comment type="subunit">
    <text evidence="1">Homodimer.</text>
</comment>
<comment type="subcellular location">
    <subcellularLocation>
        <location evidence="1">Cytoplasm</location>
    </subcellularLocation>
</comment>
<comment type="similarity">
    <text evidence="1">Belongs to the class-II aminoacyl-tRNA synthetase family.</text>
</comment>
<feature type="chain" id="PRO_1000199149" description="Histidine--tRNA ligase">
    <location>
        <begin position="1"/>
        <end position="424"/>
    </location>
</feature>
<reference key="1">
    <citation type="journal article" date="2009" name="PLoS ONE">
        <title>Salmonella paratyphi C: genetic divergence from Salmonella choleraesuis and pathogenic convergence with Salmonella typhi.</title>
        <authorList>
            <person name="Liu W.-Q."/>
            <person name="Feng Y."/>
            <person name="Wang Y."/>
            <person name="Zou Q.-H."/>
            <person name="Chen F."/>
            <person name="Guo J.-T."/>
            <person name="Peng Y.-H."/>
            <person name="Jin Y."/>
            <person name="Li Y.-G."/>
            <person name="Hu S.-N."/>
            <person name="Johnston R.N."/>
            <person name="Liu G.-R."/>
            <person name="Liu S.-L."/>
        </authorList>
    </citation>
    <scope>NUCLEOTIDE SEQUENCE [LARGE SCALE GENOMIC DNA]</scope>
    <source>
        <strain>RKS4594</strain>
    </source>
</reference>
<accession>C0PYN1</accession>
<sequence>MAKNIQAIRGMNDYLPGETAIWQRIEGTLKNVLGSYGYSEIRLPIVEQTPLFKRAIGEVTDVVEKEMYTFEDRNGDSLTLRPEGTAGCVRAGIEHGLLYNQEQRLWYIGPMFRHERPQKGRYRQFHQLGAEVFGLQGPDIDAELIMLTARWWRALGIAEHVSLELNSIGSLEARANYRDALVAFLEQHQETLDEDCKRRMYTNPLRVLDSKNPDVQALLNDAPALGDYLDDDSREHFAGLCKLLDAAGIAYTVNQRLVRGLDYYNRTVFEWVTNSLGSQGTVCAGGRYDGLVEQLGGRATPAVGFAMGLERLVLLVQAVNPEFIASPVVDIYLVAAGAQTQSAAMTLAERLRDEMPGVKLMTNHGGGNFKKQFARADKWGARIALVLGESEVADGTVVVKDLRSGEQTAVAQDSVAAHLRTLLG</sequence>
<protein>
    <recommendedName>
        <fullName evidence="1">Histidine--tRNA ligase</fullName>
        <ecNumber evidence="1">6.1.1.21</ecNumber>
    </recommendedName>
    <alternativeName>
        <fullName evidence="1">Histidyl-tRNA synthetase</fullName>
        <shortName evidence="1">HisRS</shortName>
    </alternativeName>
</protein>
<organism>
    <name type="scientific">Salmonella paratyphi C (strain RKS4594)</name>
    <dbReference type="NCBI Taxonomy" id="476213"/>
    <lineage>
        <taxon>Bacteria</taxon>
        <taxon>Pseudomonadati</taxon>
        <taxon>Pseudomonadota</taxon>
        <taxon>Gammaproteobacteria</taxon>
        <taxon>Enterobacterales</taxon>
        <taxon>Enterobacteriaceae</taxon>
        <taxon>Salmonella</taxon>
    </lineage>
</organism>
<name>SYH_SALPC</name>
<dbReference type="EC" id="6.1.1.21" evidence="1"/>
<dbReference type="EMBL" id="CP000857">
    <property type="protein sequence ID" value="ACN45298.1"/>
    <property type="molecule type" value="Genomic_DNA"/>
</dbReference>
<dbReference type="RefSeq" id="WP_001107141.1">
    <property type="nucleotide sequence ID" value="NC_012125.1"/>
</dbReference>
<dbReference type="SMR" id="C0PYN1"/>
<dbReference type="KEGG" id="sei:SPC_1132"/>
<dbReference type="HOGENOM" id="CLU_025113_1_1_6"/>
<dbReference type="Proteomes" id="UP000001599">
    <property type="component" value="Chromosome"/>
</dbReference>
<dbReference type="GO" id="GO:0005737">
    <property type="term" value="C:cytoplasm"/>
    <property type="evidence" value="ECO:0007669"/>
    <property type="project" value="UniProtKB-SubCell"/>
</dbReference>
<dbReference type="GO" id="GO:0005524">
    <property type="term" value="F:ATP binding"/>
    <property type="evidence" value="ECO:0007669"/>
    <property type="project" value="UniProtKB-UniRule"/>
</dbReference>
<dbReference type="GO" id="GO:0004821">
    <property type="term" value="F:histidine-tRNA ligase activity"/>
    <property type="evidence" value="ECO:0007669"/>
    <property type="project" value="UniProtKB-UniRule"/>
</dbReference>
<dbReference type="GO" id="GO:0006427">
    <property type="term" value="P:histidyl-tRNA aminoacylation"/>
    <property type="evidence" value="ECO:0007669"/>
    <property type="project" value="UniProtKB-UniRule"/>
</dbReference>
<dbReference type="CDD" id="cd00773">
    <property type="entry name" value="HisRS-like_core"/>
    <property type="match status" value="1"/>
</dbReference>
<dbReference type="CDD" id="cd00859">
    <property type="entry name" value="HisRS_anticodon"/>
    <property type="match status" value="1"/>
</dbReference>
<dbReference type="FunFam" id="3.30.930.10:FF:000005">
    <property type="entry name" value="Histidine--tRNA ligase"/>
    <property type="match status" value="1"/>
</dbReference>
<dbReference type="FunFam" id="3.40.50.800:FF:000007">
    <property type="entry name" value="Histidine--tRNA ligase"/>
    <property type="match status" value="1"/>
</dbReference>
<dbReference type="Gene3D" id="3.40.50.800">
    <property type="entry name" value="Anticodon-binding domain"/>
    <property type="match status" value="1"/>
</dbReference>
<dbReference type="Gene3D" id="3.30.930.10">
    <property type="entry name" value="Bira Bifunctional Protein, Domain 2"/>
    <property type="match status" value="1"/>
</dbReference>
<dbReference type="HAMAP" id="MF_00127">
    <property type="entry name" value="His_tRNA_synth"/>
    <property type="match status" value="1"/>
</dbReference>
<dbReference type="InterPro" id="IPR006195">
    <property type="entry name" value="aa-tRNA-synth_II"/>
</dbReference>
<dbReference type="InterPro" id="IPR045864">
    <property type="entry name" value="aa-tRNA-synth_II/BPL/LPL"/>
</dbReference>
<dbReference type="InterPro" id="IPR004154">
    <property type="entry name" value="Anticodon-bd"/>
</dbReference>
<dbReference type="InterPro" id="IPR036621">
    <property type="entry name" value="Anticodon-bd_dom_sf"/>
</dbReference>
<dbReference type="InterPro" id="IPR015807">
    <property type="entry name" value="His-tRNA-ligase"/>
</dbReference>
<dbReference type="InterPro" id="IPR041715">
    <property type="entry name" value="HisRS-like_core"/>
</dbReference>
<dbReference type="InterPro" id="IPR004516">
    <property type="entry name" value="HisRS/HisZ"/>
</dbReference>
<dbReference type="InterPro" id="IPR033656">
    <property type="entry name" value="HisRS_anticodon"/>
</dbReference>
<dbReference type="NCBIfam" id="TIGR00442">
    <property type="entry name" value="hisS"/>
    <property type="match status" value="1"/>
</dbReference>
<dbReference type="PANTHER" id="PTHR43707:SF1">
    <property type="entry name" value="HISTIDINE--TRNA LIGASE, MITOCHONDRIAL-RELATED"/>
    <property type="match status" value="1"/>
</dbReference>
<dbReference type="PANTHER" id="PTHR43707">
    <property type="entry name" value="HISTIDYL-TRNA SYNTHETASE"/>
    <property type="match status" value="1"/>
</dbReference>
<dbReference type="Pfam" id="PF03129">
    <property type="entry name" value="HGTP_anticodon"/>
    <property type="match status" value="1"/>
</dbReference>
<dbReference type="Pfam" id="PF13393">
    <property type="entry name" value="tRNA-synt_His"/>
    <property type="match status" value="1"/>
</dbReference>
<dbReference type="PIRSF" id="PIRSF001549">
    <property type="entry name" value="His-tRNA_synth"/>
    <property type="match status" value="1"/>
</dbReference>
<dbReference type="SUPFAM" id="SSF52954">
    <property type="entry name" value="Class II aaRS ABD-related"/>
    <property type="match status" value="1"/>
</dbReference>
<dbReference type="SUPFAM" id="SSF55681">
    <property type="entry name" value="Class II aaRS and biotin synthetases"/>
    <property type="match status" value="1"/>
</dbReference>
<dbReference type="PROSITE" id="PS50862">
    <property type="entry name" value="AA_TRNA_LIGASE_II"/>
    <property type="match status" value="1"/>
</dbReference>